<reference key="1">
    <citation type="journal article" date="2002" name="Genome">
        <title>Molecular phylogeny of the genus Hordeum using three chloroplast DNA sequences.</title>
        <authorList>
            <person name="Nishikawa T."/>
            <person name="Salomon B."/>
            <person name="Komatsuda T."/>
            <person name="von Bothmer R."/>
            <person name="Kadowaki K."/>
        </authorList>
    </citation>
    <scope>NUCLEOTIDE SEQUENCE [GENOMIC DNA]</scope>
    <source>
        <strain>H3142</strain>
    </source>
</reference>
<accession>Q76LL9</accession>
<keyword id="KW-0150">Chloroplast</keyword>
<keyword id="KW-0507">mRNA processing</keyword>
<keyword id="KW-0934">Plastid</keyword>
<keyword id="KW-0694">RNA-binding</keyword>
<keyword id="KW-0819">tRNA processing</keyword>
<proteinExistence type="inferred from homology"/>
<feature type="chain" id="PRO_0000143424" description="Maturase K">
    <location>
        <begin position="1"/>
        <end position="511"/>
    </location>
</feature>
<geneLocation type="chloroplast"/>
<organism>
    <name type="scientific">Hordeum vulgare subsp. spontaneum</name>
    <name type="common">Wild barley</name>
    <name type="synonym">Hordeum spontaneum</name>
    <dbReference type="NCBI Taxonomy" id="77009"/>
    <lineage>
        <taxon>Eukaryota</taxon>
        <taxon>Viridiplantae</taxon>
        <taxon>Streptophyta</taxon>
        <taxon>Embryophyta</taxon>
        <taxon>Tracheophyta</taxon>
        <taxon>Spermatophyta</taxon>
        <taxon>Magnoliopsida</taxon>
        <taxon>Liliopsida</taxon>
        <taxon>Poales</taxon>
        <taxon>Poaceae</taxon>
        <taxon>BOP clade</taxon>
        <taxon>Pooideae</taxon>
        <taxon>Triticodae</taxon>
        <taxon>Triticeae</taxon>
        <taxon>Hordeinae</taxon>
        <taxon>Hordeum</taxon>
    </lineage>
</organism>
<gene>
    <name evidence="1" type="primary">matK</name>
</gene>
<comment type="function">
    <text evidence="1">Usually encoded in the trnK tRNA gene intron. Probably assists in splicing its own and other chloroplast group II introns.</text>
</comment>
<comment type="subcellular location">
    <subcellularLocation>
        <location>Plastid</location>
        <location>Chloroplast</location>
    </subcellularLocation>
</comment>
<comment type="similarity">
    <text evidence="1">Belongs to the intron maturase 2 family. MatK subfamily.</text>
</comment>
<dbReference type="EMBL" id="AB078139">
    <property type="protein sequence ID" value="BAC54891.1"/>
    <property type="molecule type" value="Genomic_DNA"/>
</dbReference>
<dbReference type="GO" id="GO:0009507">
    <property type="term" value="C:chloroplast"/>
    <property type="evidence" value="ECO:0007669"/>
    <property type="project" value="UniProtKB-SubCell"/>
</dbReference>
<dbReference type="GO" id="GO:0003723">
    <property type="term" value="F:RNA binding"/>
    <property type="evidence" value="ECO:0007669"/>
    <property type="project" value="UniProtKB-KW"/>
</dbReference>
<dbReference type="GO" id="GO:0006397">
    <property type="term" value="P:mRNA processing"/>
    <property type="evidence" value="ECO:0007669"/>
    <property type="project" value="UniProtKB-KW"/>
</dbReference>
<dbReference type="GO" id="GO:0008380">
    <property type="term" value="P:RNA splicing"/>
    <property type="evidence" value="ECO:0007669"/>
    <property type="project" value="UniProtKB-UniRule"/>
</dbReference>
<dbReference type="GO" id="GO:0008033">
    <property type="term" value="P:tRNA processing"/>
    <property type="evidence" value="ECO:0007669"/>
    <property type="project" value="UniProtKB-KW"/>
</dbReference>
<dbReference type="HAMAP" id="MF_01390">
    <property type="entry name" value="MatK"/>
    <property type="match status" value="1"/>
</dbReference>
<dbReference type="InterPro" id="IPR024937">
    <property type="entry name" value="Domain_X"/>
</dbReference>
<dbReference type="InterPro" id="IPR002866">
    <property type="entry name" value="Maturase_MatK"/>
</dbReference>
<dbReference type="InterPro" id="IPR024942">
    <property type="entry name" value="Maturase_MatK_N"/>
</dbReference>
<dbReference type="PANTHER" id="PTHR34811">
    <property type="entry name" value="MATURASE K"/>
    <property type="match status" value="1"/>
</dbReference>
<dbReference type="PANTHER" id="PTHR34811:SF1">
    <property type="entry name" value="MATURASE K"/>
    <property type="match status" value="1"/>
</dbReference>
<dbReference type="Pfam" id="PF01348">
    <property type="entry name" value="Intron_maturas2"/>
    <property type="match status" value="1"/>
</dbReference>
<dbReference type="Pfam" id="PF01824">
    <property type="entry name" value="MatK_N"/>
    <property type="match status" value="1"/>
</dbReference>
<protein>
    <recommendedName>
        <fullName evidence="1">Maturase K</fullName>
    </recommendedName>
    <alternativeName>
        <fullName evidence="1">Intron maturase</fullName>
    </alternativeName>
</protein>
<evidence type="ECO:0000255" key="1">
    <source>
        <dbReference type="HAMAP-Rule" id="MF_01390"/>
    </source>
</evidence>
<name>MATK_HORVS</name>
<sequence>MEKFEGYSEKQKSRQQYFVYPLLFQEYIYAFAHDYGLNGSEPVEIVSWNNKKFSSLLVKRLIIRMYQQNFLDNSVNHPNQDRLLDYKIFFYSEFYSQILSEGFAIVVEIPFSLRELSCPKEKEIPKFQNLRSIHSIFPFLEDKFLHLDYLSHIEIPYPIHLEILVQLLQYRIQDVPSLHLLRFFLNYYSNWNSFITSMKSILFFQKENKRLVKFLYNSYVSEYEFFLLFLRKQSSCLPLAYSGTFLERIHFSRKMEHFGIMYPGFSRKTLWFFMDPLIHYVRYQGKAILASKGSFFLKKKWKCYLINFWQYYFFFWTQPRRIHINQLANSCFDFMGYLSSVPKSPLLVRNQMLENSFLIDTRMKKFDTIVPATLLIGYLSKAQFCTGSGHPISKPIWTDLSDWDILDRFGRICRNLFHYHSGSSKKRTLYRLKYILRLSCARTLARKHKSTVRTFMQRLGSAFLEEFFTEEEQVFSLMFTKTTLFSFSGSHTERIWYLDIIGINDLVNPLN</sequence>